<dbReference type="EMBL" id="AE004439">
    <property type="protein sequence ID" value="AAK03440.1"/>
    <property type="molecule type" value="Genomic_DNA"/>
</dbReference>
<dbReference type="RefSeq" id="WP_005717860.1">
    <property type="nucleotide sequence ID" value="NC_002663.1"/>
</dbReference>
<dbReference type="SMR" id="P57938"/>
<dbReference type="STRING" id="272843.PM1356"/>
<dbReference type="EnsemblBacteria" id="AAK03440">
    <property type="protein sequence ID" value="AAK03440"/>
    <property type="gene ID" value="PM1356"/>
</dbReference>
<dbReference type="GeneID" id="77206677"/>
<dbReference type="KEGG" id="pmu:PM1356"/>
<dbReference type="HOGENOM" id="CLU_002794_4_1_6"/>
<dbReference type="OrthoDB" id="9804431at2"/>
<dbReference type="Proteomes" id="UP000000809">
    <property type="component" value="Chromosome"/>
</dbReference>
<dbReference type="GO" id="GO:0005737">
    <property type="term" value="C:cytoplasm"/>
    <property type="evidence" value="ECO:0007669"/>
    <property type="project" value="UniProtKB-SubCell"/>
</dbReference>
<dbReference type="GO" id="GO:0005525">
    <property type="term" value="F:GTP binding"/>
    <property type="evidence" value="ECO:0007669"/>
    <property type="project" value="UniProtKB-UniRule"/>
</dbReference>
<dbReference type="GO" id="GO:0003924">
    <property type="term" value="F:GTPase activity"/>
    <property type="evidence" value="ECO:0007669"/>
    <property type="project" value="InterPro"/>
</dbReference>
<dbReference type="GO" id="GO:0097216">
    <property type="term" value="F:guanosine tetraphosphate binding"/>
    <property type="evidence" value="ECO:0007669"/>
    <property type="project" value="UniProtKB-ARBA"/>
</dbReference>
<dbReference type="GO" id="GO:0003746">
    <property type="term" value="F:translation elongation factor activity"/>
    <property type="evidence" value="ECO:0007669"/>
    <property type="project" value="UniProtKB-UniRule"/>
</dbReference>
<dbReference type="GO" id="GO:0032790">
    <property type="term" value="P:ribosome disassembly"/>
    <property type="evidence" value="ECO:0007669"/>
    <property type="project" value="TreeGrafter"/>
</dbReference>
<dbReference type="CDD" id="cd01886">
    <property type="entry name" value="EF-G"/>
    <property type="match status" value="1"/>
</dbReference>
<dbReference type="CDD" id="cd16262">
    <property type="entry name" value="EFG_III"/>
    <property type="match status" value="1"/>
</dbReference>
<dbReference type="CDD" id="cd01434">
    <property type="entry name" value="EFG_mtEFG1_IV"/>
    <property type="match status" value="1"/>
</dbReference>
<dbReference type="CDD" id="cd03713">
    <property type="entry name" value="EFG_mtEFG_C"/>
    <property type="match status" value="1"/>
</dbReference>
<dbReference type="CDD" id="cd04088">
    <property type="entry name" value="EFG_mtEFG_II"/>
    <property type="match status" value="1"/>
</dbReference>
<dbReference type="FunFam" id="2.40.30.10:FF:000006">
    <property type="entry name" value="Elongation factor G"/>
    <property type="match status" value="1"/>
</dbReference>
<dbReference type="FunFam" id="3.30.230.10:FF:000003">
    <property type="entry name" value="Elongation factor G"/>
    <property type="match status" value="1"/>
</dbReference>
<dbReference type="FunFam" id="3.30.70.240:FF:000001">
    <property type="entry name" value="Elongation factor G"/>
    <property type="match status" value="1"/>
</dbReference>
<dbReference type="FunFam" id="3.30.70.870:FF:000001">
    <property type="entry name" value="Elongation factor G"/>
    <property type="match status" value="1"/>
</dbReference>
<dbReference type="FunFam" id="3.40.50.300:FF:000029">
    <property type="entry name" value="Elongation factor G"/>
    <property type="match status" value="1"/>
</dbReference>
<dbReference type="Gene3D" id="3.30.230.10">
    <property type="match status" value="1"/>
</dbReference>
<dbReference type="Gene3D" id="3.30.70.240">
    <property type="match status" value="1"/>
</dbReference>
<dbReference type="Gene3D" id="3.30.70.870">
    <property type="entry name" value="Elongation Factor G (Translational Gtpase), domain 3"/>
    <property type="match status" value="1"/>
</dbReference>
<dbReference type="Gene3D" id="3.40.50.300">
    <property type="entry name" value="P-loop containing nucleotide triphosphate hydrolases"/>
    <property type="match status" value="1"/>
</dbReference>
<dbReference type="Gene3D" id="2.40.30.10">
    <property type="entry name" value="Translation factors"/>
    <property type="match status" value="1"/>
</dbReference>
<dbReference type="HAMAP" id="MF_00054_B">
    <property type="entry name" value="EF_G_EF_2_B"/>
    <property type="match status" value="1"/>
</dbReference>
<dbReference type="InterPro" id="IPR041095">
    <property type="entry name" value="EFG_II"/>
</dbReference>
<dbReference type="InterPro" id="IPR009022">
    <property type="entry name" value="EFG_III"/>
</dbReference>
<dbReference type="InterPro" id="IPR035647">
    <property type="entry name" value="EFG_III/V"/>
</dbReference>
<dbReference type="InterPro" id="IPR047872">
    <property type="entry name" value="EFG_IV"/>
</dbReference>
<dbReference type="InterPro" id="IPR035649">
    <property type="entry name" value="EFG_V"/>
</dbReference>
<dbReference type="InterPro" id="IPR000640">
    <property type="entry name" value="EFG_V-like"/>
</dbReference>
<dbReference type="InterPro" id="IPR004161">
    <property type="entry name" value="EFTu-like_2"/>
</dbReference>
<dbReference type="InterPro" id="IPR031157">
    <property type="entry name" value="G_TR_CS"/>
</dbReference>
<dbReference type="InterPro" id="IPR027417">
    <property type="entry name" value="P-loop_NTPase"/>
</dbReference>
<dbReference type="InterPro" id="IPR020568">
    <property type="entry name" value="Ribosomal_Su5_D2-typ_SF"/>
</dbReference>
<dbReference type="InterPro" id="IPR014721">
    <property type="entry name" value="Ribsml_uS5_D2-typ_fold_subgr"/>
</dbReference>
<dbReference type="InterPro" id="IPR005225">
    <property type="entry name" value="Small_GTP-bd"/>
</dbReference>
<dbReference type="InterPro" id="IPR000795">
    <property type="entry name" value="T_Tr_GTP-bd_dom"/>
</dbReference>
<dbReference type="InterPro" id="IPR009000">
    <property type="entry name" value="Transl_B-barrel_sf"/>
</dbReference>
<dbReference type="InterPro" id="IPR004540">
    <property type="entry name" value="Transl_elong_EFG/EF2"/>
</dbReference>
<dbReference type="InterPro" id="IPR005517">
    <property type="entry name" value="Transl_elong_EFG/EF2_IV"/>
</dbReference>
<dbReference type="NCBIfam" id="TIGR00484">
    <property type="entry name" value="EF-G"/>
    <property type="match status" value="1"/>
</dbReference>
<dbReference type="NCBIfam" id="NF009381">
    <property type="entry name" value="PRK12740.1-5"/>
    <property type="match status" value="1"/>
</dbReference>
<dbReference type="NCBIfam" id="TIGR00231">
    <property type="entry name" value="small_GTP"/>
    <property type="match status" value="1"/>
</dbReference>
<dbReference type="PANTHER" id="PTHR43261:SF1">
    <property type="entry name" value="RIBOSOME-RELEASING FACTOR 2, MITOCHONDRIAL"/>
    <property type="match status" value="1"/>
</dbReference>
<dbReference type="PANTHER" id="PTHR43261">
    <property type="entry name" value="TRANSLATION ELONGATION FACTOR G-RELATED"/>
    <property type="match status" value="1"/>
</dbReference>
<dbReference type="Pfam" id="PF00679">
    <property type="entry name" value="EFG_C"/>
    <property type="match status" value="1"/>
</dbReference>
<dbReference type="Pfam" id="PF14492">
    <property type="entry name" value="EFG_III"/>
    <property type="match status" value="1"/>
</dbReference>
<dbReference type="Pfam" id="PF03764">
    <property type="entry name" value="EFG_IV"/>
    <property type="match status" value="1"/>
</dbReference>
<dbReference type="Pfam" id="PF00009">
    <property type="entry name" value="GTP_EFTU"/>
    <property type="match status" value="1"/>
</dbReference>
<dbReference type="Pfam" id="PF03144">
    <property type="entry name" value="GTP_EFTU_D2"/>
    <property type="match status" value="1"/>
</dbReference>
<dbReference type="PRINTS" id="PR00315">
    <property type="entry name" value="ELONGATNFCT"/>
</dbReference>
<dbReference type="SMART" id="SM00838">
    <property type="entry name" value="EFG_C"/>
    <property type="match status" value="1"/>
</dbReference>
<dbReference type="SMART" id="SM00889">
    <property type="entry name" value="EFG_IV"/>
    <property type="match status" value="1"/>
</dbReference>
<dbReference type="SUPFAM" id="SSF54980">
    <property type="entry name" value="EF-G C-terminal domain-like"/>
    <property type="match status" value="2"/>
</dbReference>
<dbReference type="SUPFAM" id="SSF52540">
    <property type="entry name" value="P-loop containing nucleoside triphosphate hydrolases"/>
    <property type="match status" value="1"/>
</dbReference>
<dbReference type="SUPFAM" id="SSF54211">
    <property type="entry name" value="Ribosomal protein S5 domain 2-like"/>
    <property type="match status" value="1"/>
</dbReference>
<dbReference type="SUPFAM" id="SSF50447">
    <property type="entry name" value="Translation proteins"/>
    <property type="match status" value="1"/>
</dbReference>
<dbReference type="PROSITE" id="PS00301">
    <property type="entry name" value="G_TR_1"/>
    <property type="match status" value="1"/>
</dbReference>
<dbReference type="PROSITE" id="PS51722">
    <property type="entry name" value="G_TR_2"/>
    <property type="match status" value="1"/>
</dbReference>
<protein>
    <recommendedName>
        <fullName>Elongation factor G</fullName>
        <shortName>EF-G</shortName>
    </recommendedName>
</protein>
<keyword id="KW-0963">Cytoplasm</keyword>
<keyword id="KW-0251">Elongation factor</keyword>
<keyword id="KW-0342">GTP-binding</keyword>
<keyword id="KW-0547">Nucleotide-binding</keyword>
<keyword id="KW-0648">Protein biosynthesis</keyword>
<keyword id="KW-1185">Reference proteome</keyword>
<accession>P57938</accession>
<proteinExistence type="inferred from homology"/>
<organism>
    <name type="scientific">Pasteurella multocida (strain Pm70)</name>
    <dbReference type="NCBI Taxonomy" id="272843"/>
    <lineage>
        <taxon>Bacteria</taxon>
        <taxon>Pseudomonadati</taxon>
        <taxon>Pseudomonadota</taxon>
        <taxon>Gammaproteobacteria</taxon>
        <taxon>Pasteurellales</taxon>
        <taxon>Pasteurellaceae</taxon>
        <taxon>Pasteurella</taxon>
    </lineage>
</organism>
<gene>
    <name type="primary">fusA</name>
    <name type="ordered locus">PM1356</name>
</gene>
<reference key="1">
    <citation type="journal article" date="2001" name="Proc. Natl. Acad. Sci. U.S.A.">
        <title>Complete genomic sequence of Pasteurella multocida Pm70.</title>
        <authorList>
            <person name="May B.J."/>
            <person name="Zhang Q."/>
            <person name="Li L.L."/>
            <person name="Paustian M.L."/>
            <person name="Whittam T.S."/>
            <person name="Kapur V."/>
        </authorList>
    </citation>
    <scope>NUCLEOTIDE SEQUENCE [LARGE SCALE GENOMIC DNA]</scope>
    <source>
        <strain>Pm70</strain>
    </source>
</reference>
<comment type="function">
    <text evidence="1">Catalyzes the GTP-dependent ribosomal translocation step during translation elongation. During this step, the ribosome changes from the pre-translocational (PRE) to the post-translocational (POST) state as the newly formed A-site-bound peptidyl-tRNA and P-site-bound deacylated tRNA move to the P and E sites, respectively. Catalyzes the coordinated movement of the two tRNA molecules, the mRNA and conformational changes in the ribosome (By similarity).</text>
</comment>
<comment type="subcellular location">
    <subcellularLocation>
        <location evidence="1">Cytoplasm</location>
    </subcellularLocation>
</comment>
<comment type="similarity">
    <text evidence="2">Belongs to the TRAFAC class translation factor GTPase superfamily. Classic translation factor GTPase family. EF-G/EF-2 subfamily.</text>
</comment>
<sequence>MARTTPIERYRNIGISAHIDAGKTTTSERILFYTGVSHKLGEVHDGAATMDWMEQEQERGITITSAATTAFWSGMSKQYPQHRINVIDTPGHVDFTIEVERSMRVLDGAVMVYCAVGGVQPQSETVWRQANKYQVPRVAFVNKMDRTGANFLRVVEQIKTRLGGNSVPLQLPIGSEDNFKGVVDLVKMKAINWNEADQGMTFTYEEIPADMVDACEEWRQNLVESAAEASEELMEKYLGGEELTEEEIKAGLRQRVLAGEIIPVCCGSAFKNKGVQAMLDAVIDYLPAPTDIPAIKGINPDETEGERHASDDEPFSALAFKIATDPFVGNLTFFRVYSGVINSGDTVLNSVKDKRERFGRIVQMHANKREEIKEVRAGDIAAAIGLKDVGTGDTLCAQDAPIILERMEFPEPVISVAVEPKTKADQEKMGLALGRLAQEDPSFRVHTDEESGETIISGMGELHLDIIVDRMRREFKVEANIGKPQVSYRETIRTRVNDVEGKHAKQSGGRGQYGHVVIDLYPLDPEGPGYEFVNEIKGGVIPGEYIPAVDKGVQEQLKSGPLAGYPVVDLGVRLHFGSYHDVDSSELAFKLAASLAFKAAFNKANPVLLEPIMKVEVETPPDYVGDVIGDLSRRRAMVNGQEANEFVVKINAEVPLSEMFGYATDLRSQTQGRASYSMEPLKYAEAPKNVADAIIEARKK</sequence>
<name>EFG_PASMU</name>
<evidence type="ECO:0000250" key="1"/>
<evidence type="ECO:0000305" key="2"/>
<feature type="chain" id="PRO_0000091174" description="Elongation factor G">
    <location>
        <begin position="1"/>
        <end position="700"/>
    </location>
</feature>
<feature type="domain" description="tr-type G">
    <location>
        <begin position="8"/>
        <end position="290"/>
    </location>
</feature>
<feature type="binding site" evidence="1">
    <location>
        <begin position="17"/>
        <end position="24"/>
    </location>
    <ligand>
        <name>GTP</name>
        <dbReference type="ChEBI" id="CHEBI:37565"/>
    </ligand>
</feature>
<feature type="binding site" evidence="1">
    <location>
        <begin position="88"/>
        <end position="92"/>
    </location>
    <ligand>
        <name>GTP</name>
        <dbReference type="ChEBI" id="CHEBI:37565"/>
    </ligand>
</feature>
<feature type="binding site" evidence="1">
    <location>
        <begin position="142"/>
        <end position="145"/>
    </location>
    <ligand>
        <name>GTP</name>
        <dbReference type="ChEBI" id="CHEBI:37565"/>
    </ligand>
</feature>